<protein>
    <recommendedName>
        <fullName evidence="1">GPN-loop GTPase 3</fullName>
    </recommendedName>
</protein>
<evidence type="ECO:0000250" key="1">
    <source>
        <dbReference type="UniProtKB" id="Q06543"/>
    </source>
</evidence>
<evidence type="ECO:0000250" key="2">
    <source>
        <dbReference type="UniProtKB" id="Q9UYR9"/>
    </source>
</evidence>
<evidence type="ECO:0000256" key="3">
    <source>
        <dbReference type="SAM" id="MobiDB-lite"/>
    </source>
</evidence>
<evidence type="ECO:0000305" key="4"/>
<sequence length="293" mass="32888">MSKFGVLVMGPAGAGKSTFCSALIQHLQTTRRSCFYVNLDPAAESFNYEPDLDIRELITLEDVMEEMELGPNGGLIYCFEFLLQNLDFLSQALDPLSEEYLIIFDMPGQIELYTHIPLLPSLVQYLSRQGPLNINLCAAYLLESTFVIDKAKFFAGTLSAMSAMLMLEMPHVNILSKMDQVRDMVSRKELKRFVNVDVNLLQDEIGGAEEPVEGDPSSKDTLLSGRSFKRLNRAVGQLIDDFSMVSFLKLDVQDEDSVAAVLSHIDDAIQFHEAQEPREPNDEQDVDYEDADI</sequence>
<name>GPN3_ASPFU</name>
<comment type="function">
    <text evidence="1">Small GTPase required for proper nuclear import of RNA polymerase II and III (RNAPII and RNAPIII). May act at an RNAP assembly step prior to nuclear import.</text>
</comment>
<comment type="subunit">
    <text evidence="1">Heterodimers with gpn1 or gpn2. Binds to RNA polymerase II (RNAPII).</text>
</comment>
<comment type="similarity">
    <text evidence="4">Belongs to the GPN-loop GTPase family.</text>
</comment>
<accession>Q4WT40</accession>
<gene>
    <name type="ORF">AFUA_1G10640</name>
</gene>
<keyword id="KW-0342">GTP-binding</keyword>
<keyword id="KW-0378">Hydrolase</keyword>
<keyword id="KW-0547">Nucleotide-binding</keyword>
<keyword id="KW-1185">Reference proteome</keyword>
<reference key="1">
    <citation type="journal article" date="2005" name="Nature">
        <title>Genomic sequence of the pathogenic and allergenic filamentous fungus Aspergillus fumigatus.</title>
        <authorList>
            <person name="Nierman W.C."/>
            <person name="Pain A."/>
            <person name="Anderson M.J."/>
            <person name="Wortman J.R."/>
            <person name="Kim H.S."/>
            <person name="Arroyo J."/>
            <person name="Berriman M."/>
            <person name="Abe K."/>
            <person name="Archer D.B."/>
            <person name="Bermejo C."/>
            <person name="Bennett J.W."/>
            <person name="Bowyer P."/>
            <person name="Chen D."/>
            <person name="Collins M."/>
            <person name="Coulsen R."/>
            <person name="Davies R."/>
            <person name="Dyer P.S."/>
            <person name="Farman M.L."/>
            <person name="Fedorova N."/>
            <person name="Fedorova N.D."/>
            <person name="Feldblyum T.V."/>
            <person name="Fischer R."/>
            <person name="Fosker N."/>
            <person name="Fraser A."/>
            <person name="Garcia J.L."/>
            <person name="Garcia M.J."/>
            <person name="Goble A."/>
            <person name="Goldman G.H."/>
            <person name="Gomi K."/>
            <person name="Griffith-Jones S."/>
            <person name="Gwilliam R."/>
            <person name="Haas B.J."/>
            <person name="Haas H."/>
            <person name="Harris D.E."/>
            <person name="Horiuchi H."/>
            <person name="Huang J."/>
            <person name="Humphray S."/>
            <person name="Jimenez J."/>
            <person name="Keller N."/>
            <person name="Khouri H."/>
            <person name="Kitamoto K."/>
            <person name="Kobayashi T."/>
            <person name="Konzack S."/>
            <person name="Kulkarni R."/>
            <person name="Kumagai T."/>
            <person name="Lafton A."/>
            <person name="Latge J.-P."/>
            <person name="Li W."/>
            <person name="Lord A."/>
            <person name="Lu C."/>
            <person name="Majoros W.H."/>
            <person name="May G.S."/>
            <person name="Miller B.L."/>
            <person name="Mohamoud Y."/>
            <person name="Molina M."/>
            <person name="Monod M."/>
            <person name="Mouyna I."/>
            <person name="Mulligan S."/>
            <person name="Murphy L.D."/>
            <person name="O'Neil S."/>
            <person name="Paulsen I."/>
            <person name="Penalva M.A."/>
            <person name="Pertea M."/>
            <person name="Price C."/>
            <person name="Pritchard B.L."/>
            <person name="Quail M.A."/>
            <person name="Rabbinowitsch E."/>
            <person name="Rawlins N."/>
            <person name="Rajandream M.A."/>
            <person name="Reichard U."/>
            <person name="Renauld H."/>
            <person name="Robson G.D."/>
            <person name="Rodriguez de Cordoba S."/>
            <person name="Rodriguez-Pena J.M."/>
            <person name="Ronning C.M."/>
            <person name="Rutter S."/>
            <person name="Salzberg S.L."/>
            <person name="Sanchez M."/>
            <person name="Sanchez-Ferrero J.C."/>
            <person name="Saunders D."/>
            <person name="Seeger K."/>
            <person name="Squares R."/>
            <person name="Squares S."/>
            <person name="Takeuchi M."/>
            <person name="Tekaia F."/>
            <person name="Turner G."/>
            <person name="Vazquez de Aldana C.R."/>
            <person name="Weidman J."/>
            <person name="White O."/>
            <person name="Woodward J.R."/>
            <person name="Yu J.-H."/>
            <person name="Fraser C.M."/>
            <person name="Galagan J.E."/>
            <person name="Asai K."/>
            <person name="Machida M."/>
            <person name="Hall N."/>
            <person name="Barrell B.G."/>
            <person name="Denning D.W."/>
        </authorList>
    </citation>
    <scope>NUCLEOTIDE SEQUENCE [LARGE SCALE GENOMIC DNA]</scope>
    <source>
        <strain>ATCC MYA-4609 / CBS 101355 / FGSC A1100 / Af293</strain>
    </source>
</reference>
<dbReference type="EMBL" id="AAHF01000004">
    <property type="protein sequence ID" value="EAL90392.1"/>
    <property type="molecule type" value="Genomic_DNA"/>
</dbReference>
<dbReference type="RefSeq" id="XP_752430.1">
    <property type="nucleotide sequence ID" value="XM_747337.1"/>
</dbReference>
<dbReference type="SMR" id="Q4WT40"/>
<dbReference type="FunCoup" id="Q4WT40">
    <property type="interactions" value="905"/>
</dbReference>
<dbReference type="STRING" id="330879.Q4WT40"/>
<dbReference type="EnsemblFungi" id="EAL90392">
    <property type="protein sequence ID" value="EAL90392"/>
    <property type="gene ID" value="AFUA_1G10640"/>
</dbReference>
<dbReference type="GeneID" id="3510541"/>
<dbReference type="KEGG" id="afm:AFUA_1G10640"/>
<dbReference type="VEuPathDB" id="FungiDB:Afu1g10640"/>
<dbReference type="eggNOG" id="KOG1534">
    <property type="taxonomic scope" value="Eukaryota"/>
</dbReference>
<dbReference type="HOGENOM" id="CLU_037460_0_0_1"/>
<dbReference type="InParanoid" id="Q4WT40"/>
<dbReference type="OMA" id="LYTHMTV"/>
<dbReference type="OrthoDB" id="5839at2759"/>
<dbReference type="Proteomes" id="UP000002530">
    <property type="component" value="Chromosome 1"/>
</dbReference>
<dbReference type="GO" id="GO:0005525">
    <property type="term" value="F:GTP binding"/>
    <property type="evidence" value="ECO:0007669"/>
    <property type="project" value="UniProtKB-KW"/>
</dbReference>
<dbReference type="GO" id="GO:0003924">
    <property type="term" value="F:GTPase activity"/>
    <property type="evidence" value="ECO:0000318"/>
    <property type="project" value="GO_Central"/>
</dbReference>
<dbReference type="GO" id="GO:0007064">
    <property type="term" value="P:mitotic sister chromatid cohesion"/>
    <property type="evidence" value="ECO:0007669"/>
    <property type="project" value="EnsemblFungi"/>
</dbReference>
<dbReference type="GO" id="GO:0006606">
    <property type="term" value="P:protein import into nucleus"/>
    <property type="evidence" value="ECO:0007669"/>
    <property type="project" value="EnsemblFungi"/>
</dbReference>
<dbReference type="CDD" id="cd17872">
    <property type="entry name" value="GPN3"/>
    <property type="match status" value="1"/>
</dbReference>
<dbReference type="FunFam" id="3.40.50.300:FF:000552">
    <property type="entry name" value="GPN-loop GTPase 3"/>
    <property type="match status" value="1"/>
</dbReference>
<dbReference type="Gene3D" id="3.40.50.300">
    <property type="entry name" value="P-loop containing nucleotide triphosphate hydrolases"/>
    <property type="match status" value="1"/>
</dbReference>
<dbReference type="InterPro" id="IPR004130">
    <property type="entry name" value="Gpn"/>
</dbReference>
<dbReference type="InterPro" id="IPR030228">
    <property type="entry name" value="Gpn3"/>
</dbReference>
<dbReference type="InterPro" id="IPR027417">
    <property type="entry name" value="P-loop_NTPase"/>
</dbReference>
<dbReference type="PANTHER" id="PTHR21231:SF7">
    <property type="entry name" value="GPN-LOOP GTPASE 3"/>
    <property type="match status" value="1"/>
</dbReference>
<dbReference type="PANTHER" id="PTHR21231">
    <property type="entry name" value="XPA-BINDING PROTEIN 1-RELATED"/>
    <property type="match status" value="1"/>
</dbReference>
<dbReference type="Pfam" id="PF03029">
    <property type="entry name" value="ATP_bind_1"/>
    <property type="match status" value="1"/>
</dbReference>
<dbReference type="SUPFAM" id="SSF52540">
    <property type="entry name" value="P-loop containing nucleoside triphosphate hydrolases"/>
    <property type="match status" value="1"/>
</dbReference>
<feature type="chain" id="PRO_0000255587" description="GPN-loop GTPase 3">
    <location>
        <begin position="1"/>
        <end position="293"/>
    </location>
</feature>
<feature type="region of interest" description="Disordered" evidence="3">
    <location>
        <begin position="272"/>
        <end position="293"/>
    </location>
</feature>
<feature type="short sequence motif" description="Gly-Pro-Asn (GPN)-loop; involved in dimer interface" evidence="2">
    <location>
        <begin position="70"/>
        <end position="72"/>
    </location>
</feature>
<feature type="compositionally biased region" description="Basic and acidic residues" evidence="3">
    <location>
        <begin position="272"/>
        <end position="281"/>
    </location>
</feature>
<feature type="compositionally biased region" description="Acidic residues" evidence="3">
    <location>
        <begin position="282"/>
        <end position="293"/>
    </location>
</feature>
<feature type="binding site" evidence="2">
    <location>
        <begin position="13"/>
        <end position="18"/>
    </location>
    <ligand>
        <name>GTP</name>
        <dbReference type="ChEBI" id="CHEBI:37565"/>
    </ligand>
</feature>
<feature type="binding site" evidence="2">
    <location>
        <begin position="176"/>
        <end position="179"/>
    </location>
    <ligand>
        <name>GTP</name>
        <dbReference type="ChEBI" id="CHEBI:37565"/>
    </ligand>
</feature>
<feature type="site" description="Stabilizes the phosphate intermediate; shared with dimeric partner" evidence="2">
    <location>
        <position position="72"/>
    </location>
</feature>
<organism>
    <name type="scientific">Aspergillus fumigatus (strain ATCC MYA-4609 / CBS 101355 / FGSC A1100 / Af293)</name>
    <name type="common">Neosartorya fumigata</name>
    <dbReference type="NCBI Taxonomy" id="330879"/>
    <lineage>
        <taxon>Eukaryota</taxon>
        <taxon>Fungi</taxon>
        <taxon>Dikarya</taxon>
        <taxon>Ascomycota</taxon>
        <taxon>Pezizomycotina</taxon>
        <taxon>Eurotiomycetes</taxon>
        <taxon>Eurotiomycetidae</taxon>
        <taxon>Eurotiales</taxon>
        <taxon>Aspergillaceae</taxon>
        <taxon>Aspergillus</taxon>
        <taxon>Aspergillus subgen. Fumigati</taxon>
    </lineage>
</organism>
<proteinExistence type="inferred from homology"/>